<name>GRDA_PEPLI</name>
<sequence>MSLFDGKKVIIIGDRDGIPGPAMAECLKGINVEVVYSATECFVUTAAGAMDLENQNWVKNFTDQYGAENIIVLVGAAEAESAGLAAETVTAGDPTFAGPLAGVQLGLRVFHAVEPEFKGAVDSAIYDEQIGMMEMVLDVDSIIEEMKSIRADYCKFND</sequence>
<organism>
    <name type="scientific">Peptoclostridium litorale</name>
    <name type="common">Clostridium litorale</name>
    <dbReference type="NCBI Taxonomy" id="1557"/>
    <lineage>
        <taxon>Bacteria</taxon>
        <taxon>Bacillati</taxon>
        <taxon>Bacillota</taxon>
        <taxon>Clostridia</taxon>
        <taxon>Peptostreptococcales</taxon>
        <taxon>Peptoclostridiaceae</taxon>
        <taxon>Peptoclostridium</taxon>
    </lineage>
</organism>
<feature type="chain" id="PRO_0000194464" description="Glycine/sarcosine/betaine reductase complex component A">
    <location>
        <begin position="1"/>
        <end position="158"/>
    </location>
</feature>
<feature type="active site">
    <location>
        <position position="44"/>
    </location>
</feature>
<feature type="non-standard amino acid" description="Selenocysteine">
    <location>
        <position position="44"/>
    </location>
</feature>
<feature type="sequence conflict" description="In Ref. 2; AA sequence." evidence="1" ref="2">
    <location>
        <position position="2"/>
    </location>
</feature>
<feature type="sequence conflict" description="In Ref. 2; AA sequence." evidence="1" ref="2">
    <original>M</original>
    <variation>I</variation>
    <location>
        <position position="23"/>
    </location>
</feature>
<feature type="sequence conflict" description="In Ref. 2; AA sequence." evidence="1" ref="2">
    <original>INVE</original>
    <variation>T</variation>
    <location>
        <begin position="30"/>
        <end position="33"/>
    </location>
</feature>
<evidence type="ECO:0000305" key="1"/>
<comment type="function">
    <text>In the first step of glycine, betaine and sarcosine reductases, the substrate is bound to component PB via a Schiff base intermediate. Then the PB-activated substrate is nucleophilically attacked by the selenol anion of component PA to transform it to a carboxymethylated selenoether and the respective amine. By action of component PC, acetyl phosphate is formed, leaving component PA in its oxidized state. Finally component PA becomes reduced by the thioredoxin system to start a new catalytic cycle of reductive deamination.</text>
</comment>
<comment type="catalytic activity">
    <reaction>
        <text>acetyl phosphate + [thioredoxin]-disulfide + NH4(+) + H2O = [thioredoxin]-dithiol + glycine + phosphate + H(+)</text>
        <dbReference type="Rhea" id="RHEA:12232"/>
        <dbReference type="Rhea" id="RHEA-COMP:10698"/>
        <dbReference type="Rhea" id="RHEA-COMP:10700"/>
        <dbReference type="ChEBI" id="CHEBI:15377"/>
        <dbReference type="ChEBI" id="CHEBI:15378"/>
        <dbReference type="ChEBI" id="CHEBI:22191"/>
        <dbReference type="ChEBI" id="CHEBI:28938"/>
        <dbReference type="ChEBI" id="CHEBI:29950"/>
        <dbReference type="ChEBI" id="CHEBI:43474"/>
        <dbReference type="ChEBI" id="CHEBI:50058"/>
        <dbReference type="ChEBI" id="CHEBI:57305"/>
        <dbReference type="EC" id="1.21.4.2"/>
    </reaction>
</comment>
<comment type="catalytic activity">
    <reaction>
        <text>acetyl phosphate + methylamine + [thioredoxin]-disulfide + H2O = sarcosine + [thioredoxin]-dithiol + phosphate + H(+)</text>
        <dbReference type="Rhea" id="RHEA:12825"/>
        <dbReference type="Rhea" id="RHEA-COMP:10698"/>
        <dbReference type="Rhea" id="RHEA-COMP:10700"/>
        <dbReference type="ChEBI" id="CHEBI:15377"/>
        <dbReference type="ChEBI" id="CHEBI:15378"/>
        <dbReference type="ChEBI" id="CHEBI:22191"/>
        <dbReference type="ChEBI" id="CHEBI:29950"/>
        <dbReference type="ChEBI" id="CHEBI:43474"/>
        <dbReference type="ChEBI" id="CHEBI:50058"/>
        <dbReference type="ChEBI" id="CHEBI:57433"/>
        <dbReference type="ChEBI" id="CHEBI:59338"/>
        <dbReference type="EC" id="1.21.4.3"/>
    </reaction>
</comment>
<comment type="catalytic activity">
    <reaction>
        <text>acetyl phosphate + trimethylamine + [thioredoxin]-disulfide + H2O = glycine betaine + [thioredoxin]-dithiol + phosphate + H(+)</text>
        <dbReference type="Rhea" id="RHEA:11848"/>
        <dbReference type="Rhea" id="RHEA-COMP:10698"/>
        <dbReference type="Rhea" id="RHEA-COMP:10700"/>
        <dbReference type="ChEBI" id="CHEBI:15377"/>
        <dbReference type="ChEBI" id="CHEBI:15378"/>
        <dbReference type="ChEBI" id="CHEBI:17750"/>
        <dbReference type="ChEBI" id="CHEBI:22191"/>
        <dbReference type="ChEBI" id="CHEBI:29950"/>
        <dbReference type="ChEBI" id="CHEBI:43474"/>
        <dbReference type="ChEBI" id="CHEBI:50058"/>
        <dbReference type="ChEBI" id="CHEBI:58389"/>
        <dbReference type="EC" id="1.21.4.4"/>
    </reaction>
</comment>
<comment type="subunit">
    <text>Monomer. Component of the glycine, sarcosine and betaine reductase complexes, together with components B and C.</text>
</comment>
<comment type="similarity">
    <text evidence="1">Belongs to the GrdA family.</text>
</comment>
<protein>
    <recommendedName>
        <fullName>Glycine/sarcosine/betaine reductase complex component A</fullName>
        <ecNumber>1.21.4.2</ecNumber>
        <ecNumber>1.21.4.3</ecNumber>
        <ecNumber>1.21.4.4</ecNumber>
    </recommendedName>
    <alternativeName>
        <fullName>Selenoprotein PA</fullName>
    </alternativeName>
    <alternativeName>
        <fullName>Thioredoxin reductase complex selenoprotein A</fullName>
    </alternativeName>
</protein>
<gene>
    <name type="primary">grdA</name>
</gene>
<keyword id="KW-0903">Direct protein sequencing</keyword>
<keyword id="KW-0560">Oxidoreductase</keyword>
<keyword id="KW-0712">Selenocysteine</keyword>
<dbReference type="EC" id="1.21.4.2"/>
<dbReference type="EC" id="1.21.4.3"/>
<dbReference type="EC" id="1.21.4.4"/>
<dbReference type="EMBL" id="U24268">
    <property type="protein sequence ID" value="AAC43573.2"/>
    <property type="molecule type" value="Genomic_DNA"/>
</dbReference>
<dbReference type="PIR" id="S63987">
    <property type="entry name" value="S63987"/>
</dbReference>
<dbReference type="GO" id="GO:0030700">
    <property type="term" value="C:glycine reductase complex"/>
    <property type="evidence" value="ECO:0007669"/>
    <property type="project" value="InterPro"/>
</dbReference>
<dbReference type="GO" id="GO:0033795">
    <property type="term" value="F:betaine reductase activity"/>
    <property type="evidence" value="ECO:0007669"/>
    <property type="project" value="UniProtKB-EC"/>
</dbReference>
<dbReference type="GO" id="GO:0030699">
    <property type="term" value="F:glycine reductase activity"/>
    <property type="evidence" value="ECO:0007669"/>
    <property type="project" value="UniProtKB-UniRule"/>
</dbReference>
<dbReference type="GO" id="GO:0033794">
    <property type="term" value="F:sarcosine reductase activity"/>
    <property type="evidence" value="ECO:0007669"/>
    <property type="project" value="UniProtKB-EC"/>
</dbReference>
<dbReference type="HAMAP" id="MF_00826">
    <property type="entry name" value="GRDA"/>
    <property type="match status" value="1"/>
</dbReference>
<dbReference type="InterPro" id="IPR006812">
    <property type="entry name" value="GRDA"/>
</dbReference>
<dbReference type="NCBIfam" id="NF040748">
    <property type="entry name" value="reduct_selen_A"/>
    <property type="match status" value="1"/>
</dbReference>
<dbReference type="Pfam" id="PF04723">
    <property type="entry name" value="GRDA"/>
    <property type="match status" value="1"/>
</dbReference>
<dbReference type="PIRSF" id="PIRSF000181">
    <property type="entry name" value="Grc_selenoprot_A"/>
    <property type="match status" value="1"/>
</dbReference>
<proteinExistence type="evidence at protein level"/>
<reference key="1">
    <citation type="journal article" date="1995" name="Eur. J. Biochem.">
        <title>Glycine reductase of Clostridium litorale. Cloning, sequencing, and molecular analysis of the grdAB operon that contains two in-frame TGA codons for selenium incorporation.</title>
        <authorList>
            <person name="Kreimer S."/>
            <person name="Andreesen J.R."/>
        </authorList>
    </citation>
    <scope>NUCLEOTIDE SEQUENCE [GENOMIC DNA]</scope>
    <scope>SELENOCYSTEINE AT SEC-44</scope>
    <source>
        <strain>ATCC 49638 / DSM 5388 / W6</strain>
    </source>
</reference>
<reference key="2">
    <citation type="journal article" date="1991" name="J. Bacteriol.">
        <title>Interaction of selenoprotein PA and the thioredoxin system, components of the NADPH-dependent reduction of glycine in Eubacterium acidaminophilum and Clostridium litorale.</title>
        <authorList>
            <person name="Dietrichs D."/>
            <person name="Meyer M."/>
            <person name="Rieth M."/>
            <person name="Andreesen J.R."/>
        </authorList>
    </citation>
    <scope>PROTEIN SEQUENCE OF 1-38</scope>
</reference>
<reference key="3">
    <citation type="journal article" date="1992" name="J. Bacteriol.">
        <authorList>
            <person name="Dietrichs D."/>
            <person name="Meyer M."/>
            <person name="Rieth M."/>
            <person name="Andreesen J.R."/>
        </authorList>
    </citation>
    <scope>ERRATUM OF PUBMED:1917832</scope>
</reference>
<accession>P52216</accession>